<dbReference type="EMBL" id="L77117">
    <property type="protein sequence ID" value="AAB98648.1"/>
    <property type="molecule type" value="Genomic_DNA"/>
</dbReference>
<dbReference type="PIR" id="E64381">
    <property type="entry name" value="E64381"/>
</dbReference>
<dbReference type="RefSeq" id="WP_010870158.1">
    <property type="nucleotide sequence ID" value="NC_000909.1"/>
</dbReference>
<dbReference type="SMR" id="Q58069"/>
<dbReference type="STRING" id="243232.MJ_0653"/>
<dbReference type="PaxDb" id="243232-MJ_0653"/>
<dbReference type="EnsemblBacteria" id="AAB98648">
    <property type="protein sequence ID" value="AAB98648"/>
    <property type="gene ID" value="MJ_0653"/>
</dbReference>
<dbReference type="GeneID" id="1451519"/>
<dbReference type="KEGG" id="mja:MJ_0653"/>
<dbReference type="eggNOG" id="arCOG00606">
    <property type="taxonomic scope" value="Archaea"/>
</dbReference>
<dbReference type="HOGENOM" id="CLU_040681_7_0_2"/>
<dbReference type="InParanoid" id="Q58069"/>
<dbReference type="OrthoDB" id="43333at2157"/>
<dbReference type="PhylomeDB" id="Q58069"/>
<dbReference type="Proteomes" id="UP000000805">
    <property type="component" value="Chromosome"/>
</dbReference>
<dbReference type="GO" id="GO:0046872">
    <property type="term" value="F:metal ion binding"/>
    <property type="evidence" value="ECO:0007669"/>
    <property type="project" value="UniProtKB-KW"/>
</dbReference>
<dbReference type="CDD" id="cd17775">
    <property type="entry name" value="CBS_pair_bact_arch"/>
    <property type="match status" value="1"/>
</dbReference>
<dbReference type="Gene3D" id="3.10.580.10">
    <property type="entry name" value="CBS-domain"/>
    <property type="match status" value="1"/>
</dbReference>
<dbReference type="InterPro" id="IPR044065">
    <property type="entry name" value="ACP_MB"/>
</dbReference>
<dbReference type="InterPro" id="IPR000644">
    <property type="entry name" value="CBS_dom"/>
</dbReference>
<dbReference type="InterPro" id="IPR046342">
    <property type="entry name" value="CBS_dom_sf"/>
</dbReference>
<dbReference type="InterPro" id="IPR051257">
    <property type="entry name" value="Diverse_CBS-Domain"/>
</dbReference>
<dbReference type="PANTHER" id="PTHR43080:SF2">
    <property type="entry name" value="CBS DOMAIN-CONTAINING PROTEIN"/>
    <property type="match status" value="1"/>
</dbReference>
<dbReference type="PANTHER" id="PTHR43080">
    <property type="entry name" value="CBS DOMAIN-CONTAINING PROTEIN CBSX3, MITOCHONDRIAL"/>
    <property type="match status" value="1"/>
</dbReference>
<dbReference type="Pfam" id="PF00571">
    <property type="entry name" value="CBS"/>
    <property type="match status" value="2"/>
</dbReference>
<dbReference type="SMART" id="SM00116">
    <property type="entry name" value="CBS"/>
    <property type="match status" value="2"/>
</dbReference>
<dbReference type="SUPFAM" id="SSF54631">
    <property type="entry name" value="CBS-domain pair"/>
    <property type="match status" value="1"/>
</dbReference>
<dbReference type="PROSITE" id="PS51901">
    <property type="entry name" value="ACP_MB"/>
    <property type="match status" value="1"/>
</dbReference>
<dbReference type="PROSITE" id="PS51371">
    <property type="entry name" value="CBS"/>
    <property type="match status" value="2"/>
</dbReference>
<gene>
    <name type="ordered locus">MJ0653</name>
</gene>
<name>Y653_METJA</name>
<sequence length="194" mass="21723">MKIACDIPVSEVMSFPVIKATKNMSIYDIANIMTENNIGAVVIVENNKPIGIVTERDIVKRVVSKNLKPKDVLAEEVMSKKIITIPQNASITEAAKIMATHGIKRLPVVKDGELVGIVTQSDIVRVSPELLEIVIEYASITPEEKEVISLDTDEFSEEYINGICENCGYQGRVRLYQGRYLCDECIEEFEEKEE</sequence>
<accession>Q58069</accession>
<proteinExistence type="predicted"/>
<keyword id="KW-0129">CBS domain</keyword>
<keyword id="KW-0408">Iron</keyword>
<keyword id="KW-0479">Metal-binding</keyword>
<keyword id="KW-1185">Reference proteome</keyword>
<keyword id="KW-0677">Repeat</keyword>
<keyword id="KW-0862">Zinc</keyword>
<organism>
    <name type="scientific">Methanocaldococcus jannaschii (strain ATCC 43067 / DSM 2661 / JAL-1 / JCM 10045 / NBRC 100440)</name>
    <name type="common">Methanococcus jannaschii</name>
    <dbReference type="NCBI Taxonomy" id="243232"/>
    <lineage>
        <taxon>Archaea</taxon>
        <taxon>Methanobacteriati</taxon>
        <taxon>Methanobacteriota</taxon>
        <taxon>Methanomada group</taxon>
        <taxon>Methanococci</taxon>
        <taxon>Methanococcales</taxon>
        <taxon>Methanocaldococcaceae</taxon>
        <taxon>Methanocaldococcus</taxon>
    </lineage>
</organism>
<protein>
    <recommendedName>
        <fullName>Uncharacterized protein MJ0653</fullName>
    </recommendedName>
</protein>
<reference key="1">
    <citation type="journal article" date="1996" name="Science">
        <title>Complete genome sequence of the methanogenic archaeon, Methanococcus jannaschii.</title>
        <authorList>
            <person name="Bult C.J."/>
            <person name="White O."/>
            <person name="Olsen G.J."/>
            <person name="Zhou L."/>
            <person name="Fleischmann R.D."/>
            <person name="Sutton G.G."/>
            <person name="Blake J.A."/>
            <person name="FitzGerald L.M."/>
            <person name="Clayton R.A."/>
            <person name="Gocayne J.D."/>
            <person name="Kerlavage A.R."/>
            <person name="Dougherty B.A."/>
            <person name="Tomb J.-F."/>
            <person name="Adams M.D."/>
            <person name="Reich C.I."/>
            <person name="Overbeek R."/>
            <person name="Kirkness E.F."/>
            <person name="Weinstock K.G."/>
            <person name="Merrick J.M."/>
            <person name="Glodek A."/>
            <person name="Scott J.L."/>
            <person name="Geoghagen N.S.M."/>
            <person name="Weidman J.F."/>
            <person name="Fuhrmann J.L."/>
            <person name="Nguyen D."/>
            <person name="Utterback T.R."/>
            <person name="Kelley J.M."/>
            <person name="Peterson J.D."/>
            <person name="Sadow P.W."/>
            <person name="Hanna M.C."/>
            <person name="Cotton M.D."/>
            <person name="Roberts K.M."/>
            <person name="Hurst M.A."/>
            <person name="Kaine B.P."/>
            <person name="Borodovsky M."/>
            <person name="Klenk H.-P."/>
            <person name="Fraser C.M."/>
            <person name="Smith H.O."/>
            <person name="Woese C.R."/>
            <person name="Venter J.C."/>
        </authorList>
    </citation>
    <scope>NUCLEOTIDE SEQUENCE [LARGE SCALE GENOMIC DNA]</scope>
    <source>
        <strain>ATCC 43067 / DSM 2661 / JAL-1 / JCM 10045 / NBRC 100440</strain>
    </source>
</reference>
<feature type="chain" id="PRO_0000106972" description="Uncharacterized protein MJ0653">
    <location>
        <begin position="1"/>
        <end position="194"/>
    </location>
</feature>
<feature type="domain" description="CBS 1" evidence="1">
    <location>
        <begin position="13"/>
        <end position="72"/>
    </location>
</feature>
<feature type="domain" description="CBS 2" evidence="1">
    <location>
        <begin position="78"/>
        <end position="133"/>
    </location>
</feature>
<feature type="domain" description="ACP-type MB" evidence="2">
    <location>
        <begin position="159"/>
        <end position="192"/>
    </location>
</feature>
<feature type="binding site" evidence="2">
    <location>
        <position position="164"/>
    </location>
    <ligand>
        <name>Fe cation</name>
        <dbReference type="ChEBI" id="CHEBI:24875"/>
    </ligand>
</feature>
<feature type="binding site" evidence="2">
    <location>
        <position position="164"/>
    </location>
    <ligand>
        <name>Zn(2+)</name>
        <dbReference type="ChEBI" id="CHEBI:29105"/>
    </ligand>
</feature>
<feature type="binding site" evidence="2">
    <location>
        <position position="167"/>
    </location>
    <ligand>
        <name>Fe cation</name>
        <dbReference type="ChEBI" id="CHEBI:24875"/>
    </ligand>
</feature>
<feature type="binding site" evidence="2">
    <location>
        <position position="167"/>
    </location>
    <ligand>
        <name>Zn(2+)</name>
        <dbReference type="ChEBI" id="CHEBI:29105"/>
    </ligand>
</feature>
<feature type="binding site" evidence="2">
    <location>
        <position position="182"/>
    </location>
    <ligand>
        <name>Fe cation</name>
        <dbReference type="ChEBI" id="CHEBI:24875"/>
    </ligand>
</feature>
<feature type="binding site" evidence="2">
    <location>
        <position position="182"/>
    </location>
    <ligand>
        <name>Zn(2+)</name>
        <dbReference type="ChEBI" id="CHEBI:29105"/>
    </ligand>
</feature>
<feature type="binding site" evidence="2">
    <location>
        <position position="185"/>
    </location>
    <ligand>
        <name>Fe cation</name>
        <dbReference type="ChEBI" id="CHEBI:24875"/>
    </ligand>
</feature>
<feature type="binding site" evidence="2">
    <location>
        <position position="185"/>
    </location>
    <ligand>
        <name>Zn(2+)</name>
        <dbReference type="ChEBI" id="CHEBI:29105"/>
    </ligand>
</feature>
<evidence type="ECO:0000255" key="1">
    <source>
        <dbReference type="PROSITE-ProRule" id="PRU00703"/>
    </source>
</evidence>
<evidence type="ECO:0000255" key="2">
    <source>
        <dbReference type="PROSITE-ProRule" id="PRU01249"/>
    </source>
</evidence>